<feature type="chain" id="PRO_0000424214" description="4-methylaminobutanoate oxidase (formaldehyde-forming)">
    <location>
        <begin position="1"/>
        <end position="824"/>
    </location>
</feature>
<feature type="modified residue" description="Pros-8alpha-FAD histidine">
    <location>
        <position position="67"/>
    </location>
</feature>
<feature type="mutagenesis site" description="Contains a non-covalently bound FAD. Loss of enzyme activity." evidence="1">
    <original>W</original>
    <variation>F</variation>
    <variation>S</variation>
    <location>
        <position position="66"/>
    </location>
</feature>
<feature type="mutagenesis site" description="Contains a non-covalently bound FAD. Exhibits about 10% of the wild-type enzyme activity." evidence="1">
    <original>H</original>
    <variation>A</variation>
    <location>
        <position position="67"/>
    </location>
</feature>
<gene>
    <name type="primary">abo</name>
    <name type="synonym">mabO</name>
    <name type="ORF">ORF63</name>
</gene>
<accession>Q8GAI3</accession>
<organism>
    <name type="scientific">Paenarthrobacter nicotinovorans</name>
    <name type="common">Arthrobacter nicotinovorans</name>
    <dbReference type="NCBI Taxonomy" id="29320"/>
    <lineage>
        <taxon>Bacteria</taxon>
        <taxon>Bacillati</taxon>
        <taxon>Actinomycetota</taxon>
        <taxon>Actinomycetes</taxon>
        <taxon>Micrococcales</taxon>
        <taxon>Micrococcaceae</taxon>
        <taxon>Paenarthrobacter</taxon>
    </lineage>
</organism>
<geneLocation type="plasmid">
    <name>pAO1</name>
</geneLocation>
<evidence type="ECO:0000269" key="1">
    <source>
    </source>
</evidence>
<evidence type="ECO:0000269" key="2">
    <source>
    </source>
</evidence>
<evidence type="ECO:0000305" key="3"/>
<protein>
    <recommendedName>
        <fullName>4-methylaminobutanoate oxidase (formaldehyde-forming)</fullName>
        <shortName>MABO</shortName>
        <ecNumber>1.5.3.19</ecNumber>
    </recommendedName>
    <alternativeName>
        <fullName>Demethylating gamma-N-methylaminobutyrate oxidase</fullName>
    </alternativeName>
    <alternativeName>
        <fullName>Gamma-N-methylaminobutyrate oxidase 1</fullName>
    </alternativeName>
</protein>
<keyword id="KW-0274">FAD</keyword>
<keyword id="KW-0285">Flavoprotein</keyword>
<keyword id="KW-0560">Oxidoreductase</keyword>
<keyword id="KW-0614">Plasmid</keyword>
<proteinExistence type="evidence at protein level"/>
<dbReference type="EC" id="1.5.3.19"/>
<dbReference type="EMBL" id="AJ507836">
    <property type="protein sequence ID" value="CAD47921.1"/>
    <property type="molecule type" value="Genomic_DNA"/>
</dbReference>
<dbReference type="RefSeq" id="WP_016359432.1">
    <property type="nucleotide sequence ID" value="NZ_JAGINZ010000002.1"/>
</dbReference>
<dbReference type="RefSeq" id="YP_007988747.1">
    <property type="nucleotide sequence ID" value="NC_021229.1"/>
</dbReference>
<dbReference type="SMR" id="Q8GAI3"/>
<dbReference type="STRING" id="29320.CVCC1112_3054"/>
<dbReference type="KEGG" id="ag:CAD47921"/>
<dbReference type="BioCyc" id="MetaCyc:MONOMER-17148"/>
<dbReference type="UniPathway" id="UPA00106"/>
<dbReference type="GO" id="GO:0102317">
    <property type="term" value="F:4-methylaminobutyrate oxidase (demethylating) activity"/>
    <property type="evidence" value="ECO:0007669"/>
    <property type="project" value="UniProtKB-EC"/>
</dbReference>
<dbReference type="GO" id="GO:0019608">
    <property type="term" value="P:nicotine catabolic process"/>
    <property type="evidence" value="ECO:0007669"/>
    <property type="project" value="UniProtKB-UniPathway"/>
</dbReference>
<dbReference type="Gene3D" id="2.40.30.110">
    <property type="entry name" value="Aminomethyltransferase beta-barrel domains"/>
    <property type="match status" value="1"/>
</dbReference>
<dbReference type="Gene3D" id="3.30.70.1400">
    <property type="entry name" value="Aminomethyltransferase beta-barrel domains"/>
    <property type="match status" value="1"/>
</dbReference>
<dbReference type="Gene3D" id="3.30.9.10">
    <property type="entry name" value="D-Amino Acid Oxidase, subunit A, domain 2"/>
    <property type="match status" value="1"/>
</dbReference>
<dbReference type="Gene3D" id="3.50.50.60">
    <property type="entry name" value="FAD/NAD(P)-binding domain"/>
    <property type="match status" value="1"/>
</dbReference>
<dbReference type="Gene3D" id="3.30.1360.120">
    <property type="entry name" value="Probable tRNA modification gtpase trme, domain 1"/>
    <property type="match status" value="1"/>
</dbReference>
<dbReference type="InterPro" id="IPR006076">
    <property type="entry name" value="FAD-dep_OxRdtase"/>
</dbReference>
<dbReference type="InterPro" id="IPR036188">
    <property type="entry name" value="FAD/NAD-bd_sf"/>
</dbReference>
<dbReference type="InterPro" id="IPR032503">
    <property type="entry name" value="FAO_M"/>
</dbReference>
<dbReference type="InterPro" id="IPR013977">
    <property type="entry name" value="GCST_C"/>
</dbReference>
<dbReference type="InterPro" id="IPR006222">
    <property type="entry name" value="GCV_T_N"/>
</dbReference>
<dbReference type="InterPro" id="IPR028896">
    <property type="entry name" value="GcvT/YgfZ/DmdA"/>
</dbReference>
<dbReference type="InterPro" id="IPR029043">
    <property type="entry name" value="GcvT/YgfZ_C"/>
</dbReference>
<dbReference type="InterPro" id="IPR027266">
    <property type="entry name" value="TrmE/GcvT_dom1"/>
</dbReference>
<dbReference type="PANTHER" id="PTHR43757">
    <property type="entry name" value="AMINOMETHYLTRANSFERASE"/>
    <property type="match status" value="1"/>
</dbReference>
<dbReference type="PANTHER" id="PTHR43757:SF15">
    <property type="entry name" value="PYRUVATE DEHYDROGENASE PHOSPHATASE REGULATORY SUBUNIT, MITOCHONDRIAL-LIKE"/>
    <property type="match status" value="1"/>
</dbReference>
<dbReference type="Pfam" id="PF01266">
    <property type="entry name" value="DAO"/>
    <property type="match status" value="1"/>
</dbReference>
<dbReference type="Pfam" id="PF16350">
    <property type="entry name" value="FAO_M"/>
    <property type="match status" value="1"/>
</dbReference>
<dbReference type="Pfam" id="PF01571">
    <property type="entry name" value="GCV_T"/>
    <property type="match status" value="1"/>
</dbReference>
<dbReference type="Pfam" id="PF08669">
    <property type="entry name" value="GCV_T_C"/>
    <property type="match status" value="1"/>
</dbReference>
<dbReference type="SUPFAM" id="SSF101790">
    <property type="entry name" value="Aminomethyltransferase beta-barrel domain"/>
    <property type="match status" value="1"/>
</dbReference>
<dbReference type="SUPFAM" id="SSF54373">
    <property type="entry name" value="FAD-linked reductases, C-terminal domain"/>
    <property type="match status" value="1"/>
</dbReference>
<dbReference type="SUPFAM" id="SSF51905">
    <property type="entry name" value="FAD/NAD(P)-binding domain"/>
    <property type="match status" value="1"/>
</dbReference>
<dbReference type="SUPFAM" id="SSF103025">
    <property type="entry name" value="Folate-binding domain"/>
    <property type="match status" value="1"/>
</dbReference>
<sequence>MDRLVDRDISASMFTATSHDPLPTHVRTVVVGGGIIGASIAYHLSAAGENDTLLLESNVLGSGTSWHAAGLVTGARGTTTMTKLAKYGLDFYSRLEQMSGLDVSFQRCGSLSVARTAGRVDELLYAKDVADQQGVRTEWLTEDRYKELWPLATYSGVAGALLLPDDGHINPGHATVALAKLAHSLGTQIRENVAVHKVLRQGDLVVGVLTDQGIVHCDRVILACGLWTRDLAATAGVKVPLYAAEHIHVRSAEIDGAVPELPVYRDLDNSYYIRHEAGRLLVGAFEPDGLPRPVEEIPSNGFAEFGPEWEHFAPIRAKAEGVVPALASAGFDRFLNAPESFTPDANFAVGETSELSNLFVAAGFNSQGIIFAPGIGKELAEWVISGTPGFDSSAVDVQRFSGHQNNRNYLKARTKEGLGRLYAMHWPNLQMETGRNVRRTPLHARLAELGACFGEVNGGERANWYGAPGTSPTYDYSYGRPNWFDRVAEEHKAAREGVVLFDLSPFAKFEVAGPDALEVCQMAATADIDVETDKAVYTLFLNDRAGIELDGTITRLGLDRFLVVTPSFTQQKTAAYLKRIARGKAAAVFDCTAALATIGVMGPKSRELLSRISPEDWSDEAQRYTHGRMVEIADGYAYSLRVSFVGELGYELYPSADMAVNVLDALWEAGQDLGLKLAGYHALDSLRSEKGFRHLGHDIGPIDDPYSAGLRFTISMDKPGGFLGKDALLKLDPTAPDHRTVYVALEDPDPVFVHDETVYCNGLPVGRMTSGSYGHTLGRAVGIAALEPDADLSGDFEVQCKGRLYPAKVSRRPFYDPKGERLRG</sequence>
<comment type="function">
    <text evidence="1">Catalyzes the oxidative demethylation of 4-methylaminobutanoate produced from the pyrrolidine ring of nicotine. To a much lesser extent, can also use sarcosine as substrate, but is not active against dimethylglycine, methylaminopropionitrile, methylaminopropylamine, and alpha-methylaminobutanoate.</text>
</comment>
<comment type="catalytic activity">
    <reaction evidence="1">
        <text>4-(methylamino)butanoate + O2 + H2O = 4-aminobutanoate + formaldehyde + H2O2</text>
        <dbReference type="Rhea" id="RHEA:33907"/>
        <dbReference type="ChEBI" id="CHEBI:15377"/>
        <dbReference type="ChEBI" id="CHEBI:15379"/>
        <dbReference type="ChEBI" id="CHEBI:16240"/>
        <dbReference type="ChEBI" id="CHEBI:16842"/>
        <dbReference type="ChEBI" id="CHEBI:59888"/>
        <dbReference type="ChEBI" id="CHEBI:66882"/>
        <dbReference type="EC" id="1.5.3.19"/>
    </reaction>
</comment>
<comment type="cofactor">
    <cofactor evidence="1">
        <name>FAD</name>
        <dbReference type="ChEBI" id="CHEBI:57692"/>
    </cofactor>
    <text evidence="1">Binds 1 FAD covalently per subunit.</text>
</comment>
<comment type="biophysicochemical properties">
    <kinetics>
        <KM evidence="1">140 uM for 4-methylaminobutanoate</KM>
        <KM evidence="1">25 mM for sarcosine</KM>
        <text>kcat is 800 sec(-1) with 4-methylaminobutanoate as substrate. kcat is 4 sec(-1) with sarcosine as substrate.</text>
    </kinetics>
</comment>
<comment type="pathway">
    <text evidence="1">Alkaloid degradation; nicotine degradation.</text>
</comment>
<comment type="induction">
    <text evidence="2">Is transcribed only in the presence of nicotine under the control of the transcriptional activator PmfR. Forms part of an operon with purU, folD, nepA and nepB.</text>
</comment>
<comment type="similarity">
    <text evidence="3">Belongs to the GcvT family.</text>
</comment>
<name>MABO1_PAENI</name>
<reference key="1">
    <citation type="journal article" date="2003" name="J. Bacteriol.">
        <title>Sequence of the 165-kilobase catabolic plasmid pAO1 from Arthrobacter nicotinovorans and identification of a pAO1-dependent nicotine uptake system.</title>
        <authorList>
            <person name="Igloi G.L."/>
            <person name="Brandsch R."/>
        </authorList>
    </citation>
    <scope>NUCLEOTIDE SEQUENCE [GENOMIC DNA]</scope>
    <source>
        <strain>ATCC 49919 / DSM 420 / JCM 3874 / KCTC 9902 / LMG 16253 / NBRC 15511</strain>
        <plasmid>pAO1</plasmid>
    </source>
</reference>
<reference key="2">
    <citation type="journal article" date="2004" name="Eur. J. Biochem.">
        <title>A novel gamma-N-methylaminobutyrate demethylating oxidase involved in catabolism of the tobacco alkaloid nicotine by Arthrobacter nicotinovorans pAO1.</title>
        <authorList>
            <person name="Chiribau C.B."/>
            <person name="Sandu C."/>
            <person name="Fraaije M."/>
            <person name="Schiltz E."/>
            <person name="Brandsch R."/>
        </authorList>
    </citation>
    <scope>FUNCTION</scope>
    <scope>CATALYTIC ACTIVITY</scope>
    <scope>SUBSTRATE SPECIFICITY</scope>
    <scope>COFACTOR</scope>
    <scope>BIOPHYSICOCHEMICAL PROPERTIES</scope>
    <scope>PATHWAY</scope>
    <scope>MUTAGENESIS OF TRP-66 AND HIS-67</scope>
    <source>
        <strain>ATCC 49919 / DSM 420 / JCM 3874 / KCTC 9902 / LMG 16253 / NBRC 15511</strain>
        <plasmid>pAO1</plasmid>
    </source>
</reference>
<reference key="3">
    <citation type="journal article" date="2005" name="J. Bacteriol.">
        <title>Characterization of PmfR, the transcriptional activator of the pAO1-borne purU-mabO-folD operon of Arthrobacter nicotinovorans.</title>
        <authorList>
            <person name="Chiribau C.B."/>
            <person name="Sandu C."/>
            <person name="Igloi G.L."/>
            <person name="Brandsch R."/>
        </authorList>
    </citation>
    <scope>INDUCTION</scope>
    <scope>OPERON STRUCTURE</scope>
    <source>
        <strain>ATCC 49919 / DSM 420 / JCM 3874 / KCTC 9902 / LMG 16253 / NBRC 15511</strain>
        <plasmid>pAO1</plasmid>
    </source>
</reference>